<reference key="1">
    <citation type="submission" date="2008-06" db="EMBL/GenBank/DDBJ databases">
        <title>Genome and proteome analysis of A. pleuropneumoniae serotype 7.</title>
        <authorList>
            <person name="Linke B."/>
            <person name="Buettner F."/>
            <person name="Martinez-Arias R."/>
            <person name="Goesmann A."/>
            <person name="Baltes N."/>
            <person name="Tegetmeyer H."/>
            <person name="Singh M."/>
            <person name="Gerlach G.F."/>
        </authorList>
    </citation>
    <scope>NUCLEOTIDE SEQUENCE [LARGE SCALE GENOMIC DNA]</scope>
    <source>
        <strain>AP76</strain>
    </source>
</reference>
<proteinExistence type="inferred from homology"/>
<feature type="chain" id="PRO_0000377050" description="tRNA dimethylallyltransferase">
    <location>
        <begin position="1"/>
        <end position="304"/>
    </location>
</feature>
<feature type="region of interest" description="Interaction with substrate tRNA" evidence="1">
    <location>
        <begin position="27"/>
        <end position="30"/>
    </location>
</feature>
<feature type="region of interest" description="Interaction with substrate tRNA" evidence="1">
    <location>
        <begin position="151"/>
        <end position="155"/>
    </location>
</feature>
<feature type="region of interest" description="Interaction with substrate tRNA" evidence="1">
    <location>
        <begin position="232"/>
        <end position="237"/>
    </location>
</feature>
<feature type="region of interest" description="Interaction with substrate tRNA" evidence="1">
    <location>
        <begin position="265"/>
        <end position="272"/>
    </location>
</feature>
<feature type="binding site" evidence="1">
    <location>
        <begin position="2"/>
        <end position="9"/>
    </location>
    <ligand>
        <name>ATP</name>
        <dbReference type="ChEBI" id="CHEBI:30616"/>
    </ligand>
</feature>
<feature type="binding site" evidence="1">
    <location>
        <begin position="4"/>
        <end position="9"/>
    </location>
    <ligand>
        <name>substrate</name>
    </ligand>
</feature>
<feature type="site" description="Interaction with substrate tRNA" evidence="1">
    <location>
        <position position="93"/>
    </location>
</feature>
<feature type="site" description="Interaction with substrate tRNA" evidence="1">
    <location>
        <position position="115"/>
    </location>
</feature>
<organism>
    <name type="scientific">Actinobacillus pleuropneumoniae serotype 7 (strain AP76)</name>
    <dbReference type="NCBI Taxonomy" id="537457"/>
    <lineage>
        <taxon>Bacteria</taxon>
        <taxon>Pseudomonadati</taxon>
        <taxon>Pseudomonadota</taxon>
        <taxon>Gammaproteobacteria</taxon>
        <taxon>Pasteurellales</taxon>
        <taxon>Pasteurellaceae</taxon>
        <taxon>Actinobacillus</taxon>
    </lineage>
</organism>
<name>MIAA_ACTP7</name>
<evidence type="ECO:0000255" key="1">
    <source>
        <dbReference type="HAMAP-Rule" id="MF_00185"/>
    </source>
</evidence>
<evidence type="ECO:0000305" key="2"/>
<comment type="function">
    <text evidence="1">Catalyzes the transfer of a dimethylallyl group onto the adenine at position 37 in tRNAs that read codons beginning with uridine, leading to the formation of N6-(dimethylallyl)adenosine (i(6)A).</text>
</comment>
<comment type="catalytic activity">
    <reaction evidence="1">
        <text>adenosine(37) in tRNA + dimethylallyl diphosphate = N(6)-dimethylallyladenosine(37) in tRNA + diphosphate</text>
        <dbReference type="Rhea" id="RHEA:26482"/>
        <dbReference type="Rhea" id="RHEA-COMP:10162"/>
        <dbReference type="Rhea" id="RHEA-COMP:10375"/>
        <dbReference type="ChEBI" id="CHEBI:33019"/>
        <dbReference type="ChEBI" id="CHEBI:57623"/>
        <dbReference type="ChEBI" id="CHEBI:74411"/>
        <dbReference type="ChEBI" id="CHEBI:74415"/>
        <dbReference type="EC" id="2.5.1.75"/>
    </reaction>
</comment>
<comment type="cofactor">
    <cofactor evidence="1">
        <name>Mg(2+)</name>
        <dbReference type="ChEBI" id="CHEBI:18420"/>
    </cofactor>
</comment>
<comment type="subunit">
    <text evidence="1">Monomer.</text>
</comment>
<comment type="similarity">
    <text evidence="1">Belongs to the IPP transferase family.</text>
</comment>
<comment type="sequence caution" evidence="2">
    <conflict type="frameshift">
        <sequence resource="EMBL-CDS" id="ACE62700"/>
    </conflict>
</comment>
<gene>
    <name evidence="1" type="primary">miaA</name>
    <name type="ordered locus">APP7_2048</name>
</gene>
<protein>
    <recommendedName>
        <fullName evidence="1">tRNA dimethylallyltransferase</fullName>
        <ecNumber evidence="1">2.5.1.75</ecNumber>
    </recommendedName>
    <alternativeName>
        <fullName evidence="1">Dimethylallyl diphosphate:tRNA dimethylallyltransferase</fullName>
        <shortName evidence="1">DMAPP:tRNA dimethylallyltransferase</shortName>
        <shortName evidence="1">DMATase</shortName>
    </alternativeName>
    <alternativeName>
        <fullName evidence="1">Isopentenyl-diphosphate:tRNA isopentenyltransferase</fullName>
        <shortName evidence="1">IPP transferase</shortName>
        <shortName evidence="1">IPPT</shortName>
        <shortName evidence="1">IPTase</shortName>
    </alternativeName>
</protein>
<dbReference type="EC" id="2.5.1.75" evidence="1"/>
<dbReference type="EMBL" id="CP001091">
    <property type="protein sequence ID" value="ACE62700.1"/>
    <property type="status" value="ALT_FRAME"/>
    <property type="molecule type" value="Genomic_DNA"/>
</dbReference>
<dbReference type="SMR" id="B3H330"/>
<dbReference type="KEGG" id="apa:APP7_2048"/>
<dbReference type="HOGENOM" id="CLU_032616_0_0_6"/>
<dbReference type="Proteomes" id="UP000001226">
    <property type="component" value="Chromosome"/>
</dbReference>
<dbReference type="GO" id="GO:0005524">
    <property type="term" value="F:ATP binding"/>
    <property type="evidence" value="ECO:0007669"/>
    <property type="project" value="UniProtKB-UniRule"/>
</dbReference>
<dbReference type="GO" id="GO:0052381">
    <property type="term" value="F:tRNA dimethylallyltransferase activity"/>
    <property type="evidence" value="ECO:0007669"/>
    <property type="project" value="UniProtKB-UniRule"/>
</dbReference>
<dbReference type="GO" id="GO:0006400">
    <property type="term" value="P:tRNA modification"/>
    <property type="evidence" value="ECO:0007669"/>
    <property type="project" value="TreeGrafter"/>
</dbReference>
<dbReference type="FunFam" id="1.10.20.140:FF:000001">
    <property type="entry name" value="tRNA dimethylallyltransferase"/>
    <property type="match status" value="1"/>
</dbReference>
<dbReference type="Gene3D" id="1.10.20.140">
    <property type="match status" value="1"/>
</dbReference>
<dbReference type="Gene3D" id="3.40.50.300">
    <property type="entry name" value="P-loop containing nucleotide triphosphate hydrolases"/>
    <property type="match status" value="1"/>
</dbReference>
<dbReference type="HAMAP" id="MF_00185">
    <property type="entry name" value="IPP_trans"/>
    <property type="match status" value="1"/>
</dbReference>
<dbReference type="InterPro" id="IPR039657">
    <property type="entry name" value="Dimethylallyltransferase"/>
</dbReference>
<dbReference type="InterPro" id="IPR018022">
    <property type="entry name" value="IPT"/>
</dbReference>
<dbReference type="InterPro" id="IPR027417">
    <property type="entry name" value="P-loop_NTPase"/>
</dbReference>
<dbReference type="NCBIfam" id="TIGR00174">
    <property type="entry name" value="miaA"/>
    <property type="match status" value="1"/>
</dbReference>
<dbReference type="PANTHER" id="PTHR11088">
    <property type="entry name" value="TRNA DIMETHYLALLYLTRANSFERASE"/>
    <property type="match status" value="1"/>
</dbReference>
<dbReference type="PANTHER" id="PTHR11088:SF60">
    <property type="entry name" value="TRNA DIMETHYLALLYLTRANSFERASE"/>
    <property type="match status" value="1"/>
</dbReference>
<dbReference type="Pfam" id="PF01715">
    <property type="entry name" value="IPPT"/>
    <property type="match status" value="1"/>
</dbReference>
<dbReference type="SUPFAM" id="SSF52540">
    <property type="entry name" value="P-loop containing nucleoside triphosphate hydrolases"/>
    <property type="match status" value="1"/>
</dbReference>
<sequence length="304" mass="34187">MGPTASGKTDLAIALRQTLPVEVISVDSALIYKGMDIGTAKPSKAELELAPHRLIDILDPSESYSAMNFREDALREMAEITASGRIPLLVGGTMLYYKALLEGLSPLPSADPEIRAEIEAKAEQIGWSGLHRELLAIDPIAGKRINPNDSQRINRALEVFYITGKTMTELTAQQGDSLPYNVLQFAIAPQDRAVLHQRIEQRFYKMMELGFQQEVEKLRARSDLHKDLPSIRCVGYRQMWEYLDGDISLDEAIYKGICATRQLAKRQITWLRGWNSEITWLDSLDPTSSKLKMIEKIAQNSIKL</sequence>
<accession>B3H330</accession>
<keyword id="KW-0067">ATP-binding</keyword>
<keyword id="KW-0460">Magnesium</keyword>
<keyword id="KW-0547">Nucleotide-binding</keyword>
<keyword id="KW-0808">Transferase</keyword>
<keyword id="KW-0819">tRNA processing</keyword>